<organism>
    <name type="scientific">Homo sapiens</name>
    <name type="common">Human</name>
    <dbReference type="NCBI Taxonomy" id="9606"/>
    <lineage>
        <taxon>Eukaryota</taxon>
        <taxon>Metazoa</taxon>
        <taxon>Chordata</taxon>
        <taxon>Craniata</taxon>
        <taxon>Vertebrata</taxon>
        <taxon>Euteleostomi</taxon>
        <taxon>Mammalia</taxon>
        <taxon>Eutheria</taxon>
        <taxon>Euarchontoglires</taxon>
        <taxon>Primates</taxon>
        <taxon>Haplorrhini</taxon>
        <taxon>Catarrhini</taxon>
        <taxon>Hominidae</taxon>
        <taxon>Homo</taxon>
    </lineage>
</organism>
<accession>P57727</accession>
<accession>D3DSJ6</accession>
<accession>Q5USC7</accession>
<accession>Q6ZMC3</accession>
<keyword id="KW-0025">Alternative splicing</keyword>
<keyword id="KW-0068">Autocatalytic cleavage</keyword>
<keyword id="KW-0209">Deafness</keyword>
<keyword id="KW-0225">Disease variant</keyword>
<keyword id="KW-1015">Disulfide bond</keyword>
<keyword id="KW-0256">Endoplasmic reticulum</keyword>
<keyword id="KW-0325">Glycoprotein</keyword>
<keyword id="KW-0378">Hydrolase</keyword>
<keyword id="KW-0472">Membrane</keyword>
<keyword id="KW-1010">Non-syndromic deafness</keyword>
<keyword id="KW-0645">Protease</keyword>
<keyword id="KW-1267">Proteomics identification</keyword>
<keyword id="KW-1185">Reference proteome</keyword>
<keyword id="KW-0720">Serine protease</keyword>
<keyword id="KW-0735">Signal-anchor</keyword>
<keyword id="KW-0812">Transmembrane</keyword>
<keyword id="KW-1133">Transmembrane helix</keyword>
<keyword id="KW-0865">Zymogen</keyword>
<protein>
    <recommendedName>
        <fullName>Transmembrane protease serine 3</fullName>
        <ecNumber>3.4.21.-</ecNumber>
    </recommendedName>
    <alternativeName>
        <fullName>Serine protease TADG-12</fullName>
    </alternativeName>
    <alternativeName>
        <fullName>Tumor-associated differentially-expressed gene 12 protein</fullName>
    </alternativeName>
</protein>
<gene>
    <name type="primary">TMPRSS3</name>
    <name type="synonym">ECHOS1</name>
    <name type="synonym">TADG12</name>
    <name type="ORF">UNQ323/PRO382</name>
</gene>
<proteinExistence type="evidence at protein level"/>
<feature type="chain" id="PRO_0000088690" description="Transmembrane protease serine 3">
    <location>
        <begin position="1"/>
        <end position="454"/>
    </location>
</feature>
<feature type="topological domain" description="Cytoplasmic" evidence="2">
    <location>
        <begin position="1"/>
        <end position="48"/>
    </location>
</feature>
<feature type="transmembrane region" description="Helical; Signal-anchor for type II membrane protein" evidence="2">
    <location>
        <begin position="49"/>
        <end position="69"/>
    </location>
</feature>
<feature type="topological domain" description="Extracellular" evidence="2">
    <location>
        <begin position="70"/>
        <end position="454"/>
    </location>
</feature>
<feature type="domain" description="LDL-receptor class A" evidence="3">
    <location>
        <begin position="72"/>
        <end position="108"/>
    </location>
</feature>
<feature type="domain" description="SRCR" evidence="4">
    <location>
        <begin position="109"/>
        <end position="205"/>
    </location>
</feature>
<feature type="domain" description="Peptidase S1" evidence="5">
    <location>
        <begin position="217"/>
        <end position="449"/>
    </location>
</feature>
<feature type="active site" description="Charge relay system" evidence="1">
    <location>
        <position position="257"/>
    </location>
</feature>
<feature type="active site" description="Charge relay system" evidence="1">
    <location>
        <position position="304"/>
    </location>
</feature>
<feature type="active site" description="Charge relay system" evidence="19">
    <location>
        <position position="401"/>
    </location>
</feature>
<feature type="site" description="Cleavage" evidence="2">
    <location>
        <begin position="216"/>
        <end position="217"/>
    </location>
</feature>
<feature type="glycosylation site" description="N-linked (GlcNAc...) asparagine" evidence="2">
    <location>
        <position position="221"/>
    </location>
</feature>
<feature type="disulfide bond" evidence="1">
    <location>
        <begin position="73"/>
        <end position="85"/>
    </location>
</feature>
<feature type="disulfide bond" evidence="1">
    <location>
        <begin position="79"/>
        <end position="98"/>
    </location>
</feature>
<feature type="disulfide bond" evidence="1">
    <location>
        <begin position="92"/>
        <end position="107"/>
    </location>
</feature>
<feature type="disulfide bond" evidence="1">
    <location>
        <begin position="129"/>
        <end position="194"/>
    </location>
</feature>
<feature type="disulfide bond" evidence="1">
    <location>
        <begin position="142"/>
        <end position="204"/>
    </location>
</feature>
<feature type="disulfide bond" evidence="1">
    <location>
        <begin position="207"/>
        <end position="324"/>
    </location>
</feature>
<feature type="disulfide bond" evidence="1">
    <location>
        <begin position="242"/>
        <end position="258"/>
    </location>
</feature>
<feature type="disulfide bond" evidence="1">
    <location>
        <begin position="338"/>
        <end position="407"/>
    </location>
</feature>
<feature type="disulfide bond" evidence="1">
    <location>
        <begin position="370"/>
        <end position="386"/>
    </location>
</feature>
<feature type="disulfide bond" evidence="1">
    <location>
        <begin position="397"/>
        <end position="425"/>
    </location>
</feature>
<feature type="splice variant" id="VSP_005391" description="In isoform B." evidence="14">
    <location>
        <begin position="1"/>
        <end position="127"/>
    </location>
</feature>
<feature type="splice variant" id="VSP_047695" description="In isoform 6." evidence="17">
    <original>M</original>
    <variation>MQAVGPKPLPTLLCGGRTGHRTARVLSFLIRSCPCEPGKGCVYGKPVTLWPTISSVVPSTFLGLGNYEVEVEAEPDVRGPEIVTM</variation>
    <location>
        <position position="1"/>
    </location>
</feature>
<feature type="splice variant" id="VSP_005393" description="In isoform T." evidence="13">
    <original>DLYLPKSWTIQVGLVSLLDNPAPSHLVEKIVYH</original>
    <variation>EIVAPRERADRRGRKLLCWRKPTKMKGPRPSHS</variation>
    <location>
        <begin position="261"/>
        <end position="293"/>
    </location>
</feature>
<feature type="splice variant" id="VSP_005394" description="In isoform T." evidence="13">
    <location>
        <begin position="294"/>
        <end position="454"/>
    </location>
</feature>
<feature type="splice variant" id="VSP_005392" description="In isoform D." evidence="14">
    <original>EMIQPVCLPNSEENFPDGKVCWTSGWGATEDGAGDASPVLNHAAVPLISNKICNHRDVYGGIISPSMLCAGYLTGGVDSCQGDSGGPLVCQERRLWKLVGATSFGIGCAEVNKPGVYTRVTSFLDWIHEQMERDLKT</original>
    <variation>GTSGSLCGSAALPLFQEDLQLLIEAFL</variation>
    <location>
        <begin position="318"/>
        <end position="454"/>
    </location>
</feature>
<feature type="splice variant" id="VSP_013184" description="In isoform E." evidence="13 15 16 18">
    <location>
        <position position="350"/>
    </location>
</feature>
<feature type="sequence variant" id="VAR_010781" description="In dbSNP:rs928302." evidence="6 7">
    <original>V</original>
    <variation>I</variation>
    <location>
        <position position="53"/>
    </location>
</feature>
<feature type="sequence variant" id="VAR_013490" description="In DFNB8; fails to undergo proteolytic cleavage and is unable to activate ENaC; dbSNP:rs387906915." evidence="9 10">
    <original>D</original>
    <variation>G</variation>
    <location>
        <position position="103"/>
    </location>
</feature>
<feature type="sequence variant" id="VAR_013491" description="In DFNB8; fails to undergo proteolytic cleavage and is unable to activate ENaC; dbSNP:rs201632198." evidence="7 10">
    <original>R</original>
    <variation>W</variation>
    <location>
        <position position="109"/>
    </location>
</feature>
<feature type="sequence variant" id="VAR_013492" description="In dbSNP:rs35227181." evidence="7">
    <original>G</original>
    <variation>S</variation>
    <location>
        <position position="111"/>
    </location>
</feature>
<feature type="sequence variant" id="VAR_013493" description="In dbSNP:rs766000719." evidence="9">
    <original>D</original>
    <variation>N</variation>
    <location>
        <position position="173"/>
    </location>
</feature>
<feature type="sequence variant" id="VAR_013494" description="In DFNB8; fails to undergo proteolytic cleavage and is unable to activate ENaC; dbSNP:rs1333651774." evidence="7 10">
    <original>C</original>
    <variation>F</variation>
    <location>
        <position position="194"/>
    </location>
</feature>
<feature type="sequence variant" id="VAR_025354" description="In DFNB8; fails to undergo proteolytic cleavage and is unable to activate ENaC; dbSNP:rs137853000." evidence="12">
    <original>R</original>
    <variation>L</variation>
    <location>
        <position position="216"/>
    </location>
</feature>
<feature type="sequence variant" id="VAR_011678" description="In DFNB8; fails to undergo proteolytic cleavage and is unable to activate ENaC; dbSNP:rs137852999." evidence="8 10">
    <original>W</original>
    <variation>C</variation>
    <location>
        <position position="251"/>
    </location>
</feature>
<feature type="sequence variant" id="VAR_013101" description="In dbSNP:rs2839500." evidence="7">
    <original>I</original>
    <variation>V</variation>
    <location>
        <position position="253"/>
    </location>
</feature>
<feature type="sequence variant" id="VAR_011679" description="In DFNB8; fails to undergo proteolytic cleavage and is unable to activate ENaC; dbSNP:rs28939084." evidence="8 10 12">
    <original>P</original>
    <variation>L</variation>
    <location>
        <position position="404"/>
    </location>
</feature>
<feature type="sequence variant" id="VAR_013495" description="In DFNB8; fails to undergo proteolytic cleavage and is unable to activate ENaC; dbSNP:rs773780151." evidence="7 10">
    <original>C</original>
    <variation>R</variation>
    <location>
        <position position="407"/>
    </location>
</feature>
<feature type="sequence variant" id="VAR_013496" description="In DFNB8; dbSNP:rs56264519." evidence="9">
    <original>A</original>
    <variation>T</variation>
    <location>
        <position position="426"/>
    </location>
</feature>
<feature type="mutagenesis site" description="Fails to undergo proteolytic cleavage and is unable to activate ENaC." evidence="10">
    <original>S</original>
    <variation>A</variation>
    <location>
        <position position="401"/>
    </location>
</feature>
<feature type="sequence conflict" description="In Ref. 1; AAG37012." evidence="19" ref="1">
    <original>LKFFPIIVI</original>
    <variation>FEVFSQSSSL</variation>
    <location>
        <begin position="46"/>
        <end position="54"/>
    </location>
</feature>
<feature type="sequence conflict" description="In Ref. 1; AAG37012." evidence="19" ref="1">
    <original>A</original>
    <variation>T</variation>
    <location>
        <position position="90"/>
    </location>
</feature>
<feature type="sequence conflict" description="In Ref. 1; AAG37012." evidence="19" ref="1">
    <original>ICNHRDVYGGIISPSMLCAGYLTGGVD</original>
    <variation>DLQPQGRVRWHHLPLHALRGLPDGWRWN</variation>
    <location>
        <begin position="369"/>
        <end position="395"/>
    </location>
</feature>
<feature type="sequence conflict" description="In Ref. 1; AAG37012." evidence="19" ref="1">
    <original>E</original>
    <variation>D</variation>
    <location>
        <position position="427"/>
    </location>
</feature>
<evidence type="ECO:0000250" key="1"/>
<evidence type="ECO:0000255" key="2"/>
<evidence type="ECO:0000255" key="3">
    <source>
        <dbReference type="PROSITE-ProRule" id="PRU00124"/>
    </source>
</evidence>
<evidence type="ECO:0000255" key="4">
    <source>
        <dbReference type="PROSITE-ProRule" id="PRU00196"/>
    </source>
</evidence>
<evidence type="ECO:0000255" key="5">
    <source>
        <dbReference type="PROSITE-ProRule" id="PRU00274"/>
    </source>
</evidence>
<evidence type="ECO:0000269" key="6">
    <source>
    </source>
</evidence>
<evidence type="ECO:0000269" key="7">
    <source>
    </source>
</evidence>
<evidence type="ECO:0000269" key="8">
    <source>
    </source>
</evidence>
<evidence type="ECO:0000269" key="9">
    <source>
    </source>
</evidence>
<evidence type="ECO:0000269" key="10">
    <source>
    </source>
</evidence>
<evidence type="ECO:0000269" key="11">
    <source>
    </source>
</evidence>
<evidence type="ECO:0000269" key="12">
    <source>
    </source>
</evidence>
<evidence type="ECO:0000303" key="13">
    <source>
    </source>
</evidence>
<evidence type="ECO:0000303" key="14">
    <source>
    </source>
</evidence>
<evidence type="ECO:0000303" key="15">
    <source>
    </source>
</evidence>
<evidence type="ECO:0000303" key="16">
    <source>
    </source>
</evidence>
<evidence type="ECO:0000303" key="17">
    <source>
    </source>
</evidence>
<evidence type="ECO:0000303" key="18">
    <source>
    </source>
</evidence>
<evidence type="ECO:0000305" key="19"/>
<name>TMPS3_HUMAN</name>
<comment type="function">
    <text evidence="1 10">Probable serine protease that plays a role in hearing. Acts as a permissive factor for cochlear hair cell survival and activation at the onset of hearing and is required for saccular hair cell survival (By similarity). Activates ENaC (in vitro).</text>
</comment>
<comment type="subcellular location">
    <subcellularLocation>
        <location evidence="10">Endoplasmic reticulum membrane</location>
        <topology evidence="10">Single-pass type II membrane protein</topology>
    </subcellularLocation>
</comment>
<comment type="alternative products">
    <event type="alternative splicing"/>
    <isoform>
        <id>P57727-1</id>
        <name>A</name>
        <sequence type="displayed"/>
    </isoform>
    <isoform>
        <id>P57727-2</id>
        <name>B</name>
        <name>C</name>
        <sequence type="described" ref="VSP_005391"/>
    </isoform>
    <isoform>
        <id>P57727-3</id>
        <name>D</name>
        <sequence type="described" ref="VSP_005392"/>
    </isoform>
    <isoform>
        <id>P57727-4</id>
        <name>T</name>
        <name>Truncated</name>
        <name>TADG-12V</name>
        <sequence type="described" ref="VSP_005393 VSP_005394"/>
    </isoform>
    <isoform>
        <id>P57727-5</id>
        <name>E</name>
        <sequence type="described" ref="VSP_013184"/>
    </isoform>
    <isoform>
        <id>P57727-6</id>
        <name>6</name>
        <name>TMPRSS3e</name>
        <sequence type="described" ref="VSP_047695"/>
    </isoform>
</comment>
<comment type="tissue specificity">
    <text>Expressed in many tissues including fetal cochlea. Isoform T is found at increased levels in some carcinomas.</text>
</comment>
<comment type="PTM">
    <text>Undergoes autoproteolytic activation.</text>
</comment>
<comment type="disease" evidence="7 8 9 10 11 12">
    <disease id="DI-00859">
        <name>Deafness, autosomal recessive, 8</name>
        <acronym>DFNB8</acronym>
        <description>A form of non-syndromic sensorineural hearing loss. Sensorineural deafness results from damage to the neural receptors of the inner ear, the nerve pathways to the brain, or the area of the brain that receives sound information.</description>
        <dbReference type="MIM" id="601072"/>
    </disease>
    <text>The disease is caused by variants affecting the gene represented in this entry.</text>
</comment>
<comment type="miscellaneous">
    <molecule>Isoform 6</molecule>
    <text evidence="19">Has a predicted N-terminal signal sequence, indicating it may be secreted. Expressed in retina, lung, liver, pancreas, placenta and kidney.</text>
</comment>
<comment type="similarity">
    <text evidence="5">Belongs to the peptidase S1 family.</text>
</comment>
<comment type="online information" name="Atlas of Genetics and Cytogenetics in Oncology and Haematology">
    <link uri="https://atlasgeneticsoncology.org/gene/42593/TMPRSS3"/>
</comment>
<sequence length="454" mass="49405">MGENDPPAVEAPFSFRSLFGLDDLKISPVAPDADAVAAQILSLLPLKFFPIIVIGIIALILALAIGLGIHFDCSGKYRCRSSFKCIELIARCDGVSDCKDGEDEYRCVRVGGQNAVLQVFTAASWKTMCSDDWKGHYANVACAQLGFPSYVSSDNLRVSSLEGQFREEFVSIDHLLPDDKVTALHHSVYVREGCASGHVVTLQCTACGHRRGYSSRIVGGNMSLLSQWPWQASLQFQGYHLCGGSVITPLWIITAAHCVYDLYLPKSWTIQVGLVSLLDNPAPSHLVEKIVYHSKYKPKRLGNDIALMKLAGPLTFNEMIQPVCLPNSEENFPDGKVCWTSGWGATEDGAGDASPVLNHAAVPLISNKICNHRDVYGGIISPSMLCAGYLTGGVDSCQGDSGGPLVCQERRLWKLVGATSFGIGCAEVNKPGVYTRVTSFLDWIHEQMERDLKT</sequence>
<reference key="1">
    <citation type="journal article" date="2000" name="Biochim. Biophys. Acta">
        <title>Ovarian tumor cells express a novel multi-domain cell surface serine protease.</title>
        <authorList>
            <person name="Underwood L.J."/>
            <person name="Shigemasa K."/>
            <person name="Tanimoto H."/>
            <person name="Beard J.B."/>
            <person name="Schneider E.N."/>
            <person name="Wang Y."/>
            <person name="Parmley T.H."/>
            <person name="O'Brien T.J."/>
        </authorList>
    </citation>
    <scope>NUCLEOTIDE SEQUENCE [MRNA] (ISOFORMS A; E AND T)</scope>
    <source>
        <tissue>Ovarian carcinoma</tissue>
    </source>
</reference>
<reference key="2">
    <citation type="journal article" date="2001" name="Nat. Genet.">
        <title>Insertion of beta-satellite repeats identifies a transmembrane protease causing both congenital and childhood onset autosomal recessive deafness.</title>
        <authorList>
            <person name="Scott H.S."/>
            <person name="Kudoh J."/>
            <person name="Wattenhofer M."/>
            <person name="Shibuya K."/>
            <person name="Berry A."/>
            <person name="Chrast R."/>
            <person name="Guipponi M."/>
            <person name="Wang J."/>
            <person name="Kawasaki K."/>
            <person name="Asakawa S."/>
            <person name="Minoshima S."/>
            <person name="Younus F."/>
            <person name="Mehdi S.Q."/>
            <person name="Radhakrishna U."/>
            <person name="Papasavvas M.P."/>
            <person name="Gehrig C."/>
            <person name="Rossier C."/>
            <person name="Korostishevsky M."/>
            <person name="Gal A."/>
            <person name="Shimizu N."/>
            <person name="Bonne-Tamir B."/>
            <person name="Antonarakis S.E."/>
        </authorList>
    </citation>
    <scope>NUCLEOTIDE SEQUENCE [MRNA] (ISOFORMS A; B AND D)</scope>
    <scope>VARIANT ILE-53</scope>
</reference>
<reference key="3">
    <citation type="journal article" date="2004" name="BMC Med. Genet.">
        <title>Characterization of a new full length TMPRSS3 isoform and identification of mutant alleles responsible for nonsyndromic recessive deafness in Newfoundland and Pakistan.</title>
        <authorList>
            <person name="Ahmed Z.M."/>
            <person name="Li X.C."/>
            <person name="Powell S.D."/>
            <person name="Riazuddin S."/>
            <person name="Young T.L."/>
            <person name="Ramzan K."/>
            <person name="Ahmad Z."/>
            <person name="Luscombe S."/>
            <person name="Dhillon K."/>
            <person name="MacLaren L."/>
            <person name="Ploplis B."/>
            <person name="Shotland L.I."/>
            <person name="Ives E."/>
            <person name="Riazuddin S."/>
            <person name="Friedman T.B."/>
            <person name="Morell R.J."/>
            <person name="Wilcox E.R."/>
        </authorList>
    </citation>
    <scope>NUCLEOTIDE SEQUENCE [MRNA] (ISOFORM 6)</scope>
    <scope>INVOLVEMENT IN DFNB8</scope>
    <source>
        <tissue>Retina</tissue>
    </source>
</reference>
<reference key="4">
    <citation type="journal article" date="2003" name="Genome Res.">
        <title>The secreted protein discovery initiative (SPDI), a large-scale effort to identify novel human secreted and transmembrane proteins: a bioinformatics assessment.</title>
        <authorList>
            <person name="Clark H.F."/>
            <person name="Gurney A.L."/>
            <person name="Abaya E."/>
            <person name="Baker K."/>
            <person name="Baldwin D.T."/>
            <person name="Brush J."/>
            <person name="Chen J."/>
            <person name="Chow B."/>
            <person name="Chui C."/>
            <person name="Crowley C."/>
            <person name="Currell B."/>
            <person name="Deuel B."/>
            <person name="Dowd P."/>
            <person name="Eaton D."/>
            <person name="Foster J.S."/>
            <person name="Grimaldi C."/>
            <person name="Gu Q."/>
            <person name="Hass P.E."/>
            <person name="Heldens S."/>
            <person name="Huang A."/>
            <person name="Kim H.S."/>
            <person name="Klimowski L."/>
            <person name="Jin Y."/>
            <person name="Johnson S."/>
            <person name="Lee J."/>
            <person name="Lewis L."/>
            <person name="Liao D."/>
            <person name="Mark M.R."/>
            <person name="Robbie E."/>
            <person name="Sanchez C."/>
            <person name="Schoenfeld J."/>
            <person name="Seshagiri S."/>
            <person name="Simmons L."/>
            <person name="Singh J."/>
            <person name="Smith V."/>
            <person name="Stinson J."/>
            <person name="Vagts A."/>
            <person name="Vandlen R.L."/>
            <person name="Watanabe C."/>
            <person name="Wieand D."/>
            <person name="Woods K."/>
            <person name="Xie M.-H."/>
            <person name="Yansura D.G."/>
            <person name="Yi S."/>
            <person name="Yu G."/>
            <person name="Yuan J."/>
            <person name="Zhang M."/>
            <person name="Zhang Z."/>
            <person name="Goddard A.D."/>
            <person name="Wood W.I."/>
            <person name="Godowski P.J."/>
            <person name="Gray A.M."/>
        </authorList>
    </citation>
    <scope>NUCLEOTIDE SEQUENCE [LARGE SCALE MRNA] (ISOFORM E)</scope>
</reference>
<reference key="5">
    <citation type="journal article" date="2004" name="Nat. Genet.">
        <title>Complete sequencing and characterization of 21,243 full-length human cDNAs.</title>
        <authorList>
            <person name="Ota T."/>
            <person name="Suzuki Y."/>
            <person name="Nishikawa T."/>
            <person name="Otsuki T."/>
            <person name="Sugiyama T."/>
            <person name="Irie R."/>
            <person name="Wakamatsu A."/>
            <person name="Hayashi K."/>
            <person name="Sato H."/>
            <person name="Nagai K."/>
            <person name="Kimura K."/>
            <person name="Makita H."/>
            <person name="Sekine M."/>
            <person name="Obayashi M."/>
            <person name="Nishi T."/>
            <person name="Shibahara T."/>
            <person name="Tanaka T."/>
            <person name="Ishii S."/>
            <person name="Yamamoto J."/>
            <person name="Saito K."/>
            <person name="Kawai Y."/>
            <person name="Isono Y."/>
            <person name="Nakamura Y."/>
            <person name="Nagahari K."/>
            <person name="Murakami K."/>
            <person name="Yasuda T."/>
            <person name="Iwayanagi T."/>
            <person name="Wagatsuma M."/>
            <person name="Shiratori A."/>
            <person name="Sudo H."/>
            <person name="Hosoiri T."/>
            <person name="Kaku Y."/>
            <person name="Kodaira H."/>
            <person name="Kondo H."/>
            <person name="Sugawara M."/>
            <person name="Takahashi M."/>
            <person name="Kanda K."/>
            <person name="Yokoi T."/>
            <person name="Furuya T."/>
            <person name="Kikkawa E."/>
            <person name="Omura Y."/>
            <person name="Abe K."/>
            <person name="Kamihara K."/>
            <person name="Katsuta N."/>
            <person name="Sato K."/>
            <person name="Tanikawa M."/>
            <person name="Yamazaki M."/>
            <person name="Ninomiya K."/>
            <person name="Ishibashi T."/>
            <person name="Yamashita H."/>
            <person name="Murakawa K."/>
            <person name="Fujimori K."/>
            <person name="Tanai H."/>
            <person name="Kimata M."/>
            <person name="Watanabe M."/>
            <person name="Hiraoka S."/>
            <person name="Chiba Y."/>
            <person name="Ishida S."/>
            <person name="Ono Y."/>
            <person name="Takiguchi S."/>
            <person name="Watanabe S."/>
            <person name="Yosida M."/>
            <person name="Hotuta T."/>
            <person name="Kusano J."/>
            <person name="Kanehori K."/>
            <person name="Takahashi-Fujii A."/>
            <person name="Hara H."/>
            <person name="Tanase T.-O."/>
            <person name="Nomura Y."/>
            <person name="Togiya S."/>
            <person name="Komai F."/>
            <person name="Hara R."/>
            <person name="Takeuchi K."/>
            <person name="Arita M."/>
            <person name="Imose N."/>
            <person name="Musashino K."/>
            <person name="Yuuki H."/>
            <person name="Oshima A."/>
            <person name="Sasaki N."/>
            <person name="Aotsuka S."/>
            <person name="Yoshikawa Y."/>
            <person name="Matsunawa H."/>
            <person name="Ichihara T."/>
            <person name="Shiohata N."/>
            <person name="Sano S."/>
            <person name="Moriya S."/>
            <person name="Momiyama H."/>
            <person name="Satoh N."/>
            <person name="Takami S."/>
            <person name="Terashima Y."/>
            <person name="Suzuki O."/>
            <person name="Nakagawa S."/>
            <person name="Senoh A."/>
            <person name="Mizoguchi H."/>
            <person name="Goto Y."/>
            <person name="Shimizu F."/>
            <person name="Wakebe H."/>
            <person name="Hishigaki H."/>
            <person name="Watanabe T."/>
            <person name="Sugiyama A."/>
            <person name="Takemoto M."/>
            <person name="Kawakami B."/>
            <person name="Yamazaki M."/>
            <person name="Watanabe K."/>
            <person name="Kumagai A."/>
            <person name="Itakura S."/>
            <person name="Fukuzumi Y."/>
            <person name="Fujimori Y."/>
            <person name="Komiyama M."/>
            <person name="Tashiro H."/>
            <person name="Tanigami A."/>
            <person name="Fujiwara T."/>
            <person name="Ono T."/>
            <person name="Yamada K."/>
            <person name="Fujii Y."/>
            <person name="Ozaki K."/>
            <person name="Hirao M."/>
            <person name="Ohmori Y."/>
            <person name="Kawabata A."/>
            <person name="Hikiji T."/>
            <person name="Kobatake N."/>
            <person name="Inagaki H."/>
            <person name="Ikema Y."/>
            <person name="Okamoto S."/>
            <person name="Okitani R."/>
            <person name="Kawakami T."/>
            <person name="Noguchi S."/>
            <person name="Itoh T."/>
            <person name="Shigeta K."/>
            <person name="Senba T."/>
            <person name="Matsumura K."/>
            <person name="Nakajima Y."/>
            <person name="Mizuno T."/>
            <person name="Morinaga M."/>
            <person name="Sasaki M."/>
            <person name="Togashi T."/>
            <person name="Oyama M."/>
            <person name="Hata H."/>
            <person name="Watanabe M."/>
            <person name="Komatsu T."/>
            <person name="Mizushima-Sugano J."/>
            <person name="Satoh T."/>
            <person name="Shirai Y."/>
            <person name="Takahashi Y."/>
            <person name="Nakagawa K."/>
            <person name="Okumura K."/>
            <person name="Nagase T."/>
            <person name="Nomura N."/>
            <person name="Kikuchi H."/>
            <person name="Masuho Y."/>
            <person name="Yamashita R."/>
            <person name="Nakai K."/>
            <person name="Yada T."/>
            <person name="Nakamura Y."/>
            <person name="Ohara O."/>
            <person name="Isogai T."/>
            <person name="Sugano S."/>
        </authorList>
    </citation>
    <scope>NUCLEOTIDE SEQUENCE [LARGE SCALE MRNA] (ISOFORM E)</scope>
</reference>
<reference key="6">
    <citation type="journal article" date="2000" name="Nature">
        <title>The DNA sequence of human chromosome 21.</title>
        <authorList>
            <person name="Hattori M."/>
            <person name="Fujiyama A."/>
            <person name="Taylor T.D."/>
            <person name="Watanabe H."/>
            <person name="Yada T."/>
            <person name="Park H.-S."/>
            <person name="Toyoda A."/>
            <person name="Ishii K."/>
            <person name="Totoki Y."/>
            <person name="Choi D.-K."/>
            <person name="Groner Y."/>
            <person name="Soeda E."/>
            <person name="Ohki M."/>
            <person name="Takagi T."/>
            <person name="Sakaki Y."/>
            <person name="Taudien S."/>
            <person name="Blechschmidt K."/>
            <person name="Polley A."/>
            <person name="Menzel U."/>
            <person name="Delabar J."/>
            <person name="Kumpf K."/>
            <person name="Lehmann R."/>
            <person name="Patterson D."/>
            <person name="Reichwald K."/>
            <person name="Rump A."/>
            <person name="Schillhabel M."/>
            <person name="Schudy A."/>
            <person name="Zimmermann W."/>
            <person name="Rosenthal A."/>
            <person name="Kudoh J."/>
            <person name="Shibuya K."/>
            <person name="Kawasaki K."/>
            <person name="Asakawa S."/>
            <person name="Shintani A."/>
            <person name="Sasaki T."/>
            <person name="Nagamine K."/>
            <person name="Mitsuyama S."/>
            <person name="Antonarakis S.E."/>
            <person name="Minoshima S."/>
            <person name="Shimizu N."/>
            <person name="Nordsiek G."/>
            <person name="Hornischer K."/>
            <person name="Brandt P."/>
            <person name="Scharfe M."/>
            <person name="Schoen O."/>
            <person name="Desario A."/>
            <person name="Reichelt J."/>
            <person name="Kauer G."/>
            <person name="Bloecker H."/>
            <person name="Ramser J."/>
            <person name="Beck A."/>
            <person name="Klages S."/>
            <person name="Hennig S."/>
            <person name="Riesselmann L."/>
            <person name="Dagand E."/>
            <person name="Wehrmeyer S."/>
            <person name="Borzym K."/>
            <person name="Gardiner K."/>
            <person name="Nizetic D."/>
            <person name="Francis F."/>
            <person name="Lehrach H."/>
            <person name="Reinhardt R."/>
            <person name="Yaspo M.-L."/>
        </authorList>
    </citation>
    <scope>NUCLEOTIDE SEQUENCE [LARGE SCALE GENOMIC DNA]</scope>
</reference>
<reference key="7">
    <citation type="submission" date="2005-09" db="EMBL/GenBank/DDBJ databases">
        <authorList>
            <person name="Mural R.J."/>
            <person name="Istrail S."/>
            <person name="Sutton G.G."/>
            <person name="Florea L."/>
            <person name="Halpern A.L."/>
            <person name="Mobarry C.M."/>
            <person name="Lippert R."/>
            <person name="Walenz B."/>
            <person name="Shatkay H."/>
            <person name="Dew I."/>
            <person name="Miller J.R."/>
            <person name="Flanigan M.J."/>
            <person name="Edwards N.J."/>
            <person name="Bolanos R."/>
            <person name="Fasulo D."/>
            <person name="Halldorsson B.V."/>
            <person name="Hannenhalli S."/>
            <person name="Turner R."/>
            <person name="Yooseph S."/>
            <person name="Lu F."/>
            <person name="Nusskern D.R."/>
            <person name="Shue B.C."/>
            <person name="Zheng X.H."/>
            <person name="Zhong F."/>
            <person name="Delcher A.L."/>
            <person name="Huson D.H."/>
            <person name="Kravitz S.A."/>
            <person name="Mouchard L."/>
            <person name="Reinert K."/>
            <person name="Remington K.A."/>
            <person name="Clark A.G."/>
            <person name="Waterman M.S."/>
            <person name="Eichler E.E."/>
            <person name="Adams M.D."/>
            <person name="Hunkapiller M.W."/>
            <person name="Myers E.W."/>
            <person name="Venter J.C."/>
        </authorList>
    </citation>
    <scope>NUCLEOTIDE SEQUENCE [LARGE SCALE GENOMIC DNA]</scope>
</reference>
<reference key="8">
    <citation type="journal article" date="2004" name="Genome Res.">
        <title>The status, quality, and expansion of the NIH full-length cDNA project: the Mammalian Gene Collection (MGC).</title>
        <authorList>
            <consortium name="The MGC Project Team"/>
        </authorList>
    </citation>
    <scope>NUCLEOTIDE SEQUENCE [LARGE SCALE MRNA] (ISOFORMS A AND E)</scope>
    <source>
        <tissue>Lung</tissue>
    </source>
</reference>
<reference key="9">
    <citation type="journal article" date="2002" name="Hum. Mol. Genet.">
        <title>The transmembrane serine protease (TMPRSS3) mutated in deafness DFNB8/10 activates the epithelial sodium channel (ENaC) in vitro.</title>
        <authorList>
            <person name="Guipponi M."/>
            <person name="Vuagniaux G."/>
            <person name="Wattenhofer M."/>
            <person name="Shibuya K."/>
            <person name="Vazquez M."/>
            <person name="Dougherty L."/>
            <person name="Scamuffa N."/>
            <person name="Guida E."/>
            <person name="Okui M."/>
            <person name="Rossier C."/>
            <person name="Hancock M."/>
            <person name="Buchet K."/>
            <person name="Reymond A."/>
            <person name="Hummler E."/>
            <person name="Marzella P.L."/>
            <person name="Kudoh J."/>
            <person name="Shimizu N."/>
            <person name="Scott H.S."/>
            <person name="Antonarakis S.E."/>
            <person name="Rossier B.C."/>
        </authorList>
    </citation>
    <scope>SUBCELLULAR LOCATION</scope>
    <scope>AUTOCATALYTIC CLEAVAGE</scope>
    <scope>MUTAGENESIS OF SER-401</scope>
    <scope>CHARACTERIZATION OF VARIANTS DFNB8 GLY-103; TRP-109; PHE-194; CYS-251; LEU-404 AND ARG-407</scope>
    <scope>FUNCTION IN ENAC CLEAVAGE</scope>
</reference>
<reference key="10">
    <citation type="journal article" date="2001" name="Hum. Mutat.">
        <title>Novel missense mutations of TMPRSS3 in two consanguineous Tunisian families with non-syndromic autosomal recessive deafness.</title>
        <authorList>
            <person name="Masmoudi S."/>
            <person name="Antonarakis S.E."/>
            <person name="Schwede T."/>
            <person name="Ghorbel A.M."/>
            <person name="Gratri M."/>
            <person name="Pappasavas M.P."/>
            <person name="Drira M."/>
            <person name="Elgaied-Boulila A."/>
            <person name="Wattenhofer M."/>
            <person name="Rossier C."/>
            <person name="Scott H.S."/>
            <person name="Ayadi H."/>
            <person name="Guipponi M."/>
        </authorList>
    </citation>
    <scope>VARIANTS DFNB8 CYS-251 AND LEU-404</scope>
</reference>
<reference key="11">
    <citation type="journal article" date="2001" name="J. Med. Genet.">
        <title>Novel mutations of TMPRSS3 in four DFNB8/B10 families segregating congenital autosomal recessive deafness.</title>
        <authorList>
            <person name="Ben-Yosef T."/>
            <person name="Wattenhofer M."/>
            <person name="Riazuddin S."/>
            <person name="Ahmed Z.M."/>
            <person name="Scott H.S."/>
            <person name="Kudoh J."/>
            <person name="Shibuya K."/>
            <person name="Antonarakis S.E."/>
            <person name="Bonne-Tamir B."/>
            <person name="Radhakrishna U."/>
            <person name="Naz S."/>
            <person name="Ahmed Z."/>
            <person name="Riazuddin S."/>
            <person name="Pandya A."/>
            <person name="Nance W.E."/>
            <person name="Wilcox E.R."/>
            <person name="Friedman T.B."/>
            <person name="Morell R.J."/>
        </authorList>
    </citation>
    <scope>VARIANTS DFNB8 TRP-109; PHE-194 AND ARG-407</scope>
    <scope>VARIANTS ILE-53; SER-111 AND VAL-253</scope>
</reference>
<reference key="12">
    <citation type="journal article" date="2002" name="J. Mol. Med.">
        <title>Mutations in the TMPRSS3 gene are a rare cause of childhood nonsyndromic deafness in Caucasian patients.</title>
        <authorList>
            <person name="Wattenhofer M."/>
            <person name="Di Iorio V."/>
            <person name="Rabionet R."/>
            <person name="Dougherty L."/>
            <person name="Pampanos A."/>
            <person name="Schwede T."/>
            <person name="Montserrat-Sentis B."/>
            <person name="Arbones L."/>
            <person name="Iliades T."/>
            <person name="Pasquadibisceglie A."/>
            <person name="D'Amelio M."/>
            <person name="Alwan S."/>
            <person name="Rossier C."/>
            <person name="Dahl H.-H.M."/>
            <person name="Petersen M.B."/>
            <person name="Estivill X."/>
            <person name="Gasparini P."/>
            <person name="Scott H.S."/>
            <person name="Antonarakis S.E."/>
        </authorList>
    </citation>
    <scope>VARIANTS DFNB8 GLY-103 AND THR-426</scope>
    <scope>VARIANT ASN-173</scope>
</reference>
<reference key="13">
    <citation type="journal article" date="2005" name="Hum. Genet.">
        <title>A novel TMPRSS3 missense mutation in a DFNB8/10 family prevents proteolytic activation of the protein.</title>
        <authorList>
            <person name="Wattenhofer M."/>
            <person name="Sahin-Calapoglu N."/>
            <person name="Andreasen D."/>
            <person name="Kalay E."/>
            <person name="Caylan R."/>
            <person name="Braillard B."/>
            <person name="Fowler-Jaeger N."/>
            <person name="Reymond A."/>
            <person name="Rossier B.C."/>
            <person name="Karaguzel A."/>
            <person name="Antonarakis S.E."/>
        </authorList>
    </citation>
    <scope>VARIANTS DFNB8 LEU-216 AND LEU-404</scope>
</reference>
<dbReference type="EC" id="3.4.21.-"/>
<dbReference type="EMBL" id="AF201380">
    <property type="protein sequence ID" value="AAG37012.1"/>
    <property type="molecule type" value="mRNA"/>
</dbReference>
<dbReference type="EMBL" id="AB038157">
    <property type="protein sequence ID" value="BAB20077.1"/>
    <property type="molecule type" value="mRNA"/>
</dbReference>
<dbReference type="EMBL" id="AB038158">
    <property type="protein sequence ID" value="BAB20078.1"/>
    <property type="molecule type" value="mRNA"/>
</dbReference>
<dbReference type="EMBL" id="AB038159">
    <property type="protein sequence ID" value="BAB20079.1"/>
    <property type="molecule type" value="mRNA"/>
</dbReference>
<dbReference type="EMBL" id="AB038160">
    <property type="protein sequence ID" value="BAB20080.1"/>
    <property type="molecule type" value="mRNA"/>
</dbReference>
<dbReference type="EMBL" id="AY633572">
    <property type="protein sequence ID" value="AAT66641.1"/>
    <property type="molecule type" value="mRNA"/>
</dbReference>
<dbReference type="EMBL" id="AY358458">
    <property type="protein sequence ID" value="AAQ88823.1"/>
    <property type="molecule type" value="mRNA"/>
</dbReference>
<dbReference type="EMBL" id="AK172842">
    <property type="protein sequence ID" value="BAD18806.1"/>
    <property type="molecule type" value="mRNA"/>
</dbReference>
<dbReference type="EMBL" id="AP001623">
    <property type="status" value="NOT_ANNOTATED_CDS"/>
    <property type="molecule type" value="Genomic_DNA"/>
</dbReference>
<dbReference type="EMBL" id="CH471079">
    <property type="protein sequence ID" value="EAX09564.1"/>
    <property type="molecule type" value="Genomic_DNA"/>
</dbReference>
<dbReference type="EMBL" id="CH471079">
    <property type="protein sequence ID" value="EAX09566.1"/>
    <property type="molecule type" value="Genomic_DNA"/>
</dbReference>
<dbReference type="EMBL" id="BC074846">
    <property type="protein sequence ID" value="AAH74846.1"/>
    <property type="molecule type" value="mRNA"/>
</dbReference>
<dbReference type="EMBL" id="BC074847">
    <property type="protein sequence ID" value="AAH74847.1"/>
    <property type="molecule type" value="mRNA"/>
</dbReference>
<dbReference type="CCDS" id="CCDS13686.1">
    <molecule id="P57727-1"/>
</dbReference>
<dbReference type="CCDS" id="CCDS42939.1">
    <molecule id="P57727-3"/>
</dbReference>
<dbReference type="CCDS" id="CCDS58790.1">
    <molecule id="P57727-5"/>
</dbReference>
<dbReference type="RefSeq" id="NP_001243246.1">
    <molecule id="P57727-5"/>
    <property type="nucleotide sequence ID" value="NM_001256317.3"/>
</dbReference>
<dbReference type="RefSeq" id="NP_076927.1">
    <molecule id="P57727-1"/>
    <property type="nucleotide sequence ID" value="NM_024022.4"/>
</dbReference>
<dbReference type="RefSeq" id="NP_115780.1">
    <molecule id="P57727-2"/>
    <property type="nucleotide sequence ID" value="NM_032404.3"/>
</dbReference>
<dbReference type="RefSeq" id="NP_115781.1">
    <molecule id="P57727-3"/>
    <property type="nucleotide sequence ID" value="NM_032405.2"/>
</dbReference>
<dbReference type="SMR" id="P57727"/>
<dbReference type="BioGRID" id="122236">
    <property type="interactions" value="48"/>
</dbReference>
<dbReference type="FunCoup" id="P57727">
    <property type="interactions" value="588"/>
</dbReference>
<dbReference type="IntAct" id="P57727">
    <property type="interactions" value="36"/>
</dbReference>
<dbReference type="STRING" id="9606.ENSP00000411013"/>
<dbReference type="MEROPS" id="S01.079"/>
<dbReference type="TCDB" id="8.A.131.1.1">
    <property type="family name" value="the transmembrane protease serine 3 (tmprss3) family"/>
</dbReference>
<dbReference type="GlyCosmos" id="P57727">
    <property type="glycosylation" value="1 site, No reported glycans"/>
</dbReference>
<dbReference type="GlyGen" id="P57727">
    <property type="glycosylation" value="1 site"/>
</dbReference>
<dbReference type="iPTMnet" id="P57727"/>
<dbReference type="PhosphoSitePlus" id="P57727"/>
<dbReference type="BioMuta" id="TMPRSS3"/>
<dbReference type="DMDM" id="13124582"/>
<dbReference type="jPOST" id="P57727"/>
<dbReference type="MassIVE" id="P57727"/>
<dbReference type="PaxDb" id="9606-ENSP00000291532"/>
<dbReference type="PeptideAtlas" id="P57727"/>
<dbReference type="Antibodypedia" id="23790">
    <property type="antibodies" value="286 antibodies from 33 providers"/>
</dbReference>
<dbReference type="DNASU" id="64699"/>
<dbReference type="Ensembl" id="ENST00000398397.3">
    <molecule id="P57727-3"/>
    <property type="protein sequence ID" value="ENSP00000381434.3"/>
    <property type="gene ID" value="ENSG00000160183.17"/>
</dbReference>
<dbReference type="Ensembl" id="ENST00000433957.7">
    <molecule id="P57727-1"/>
    <property type="protein sequence ID" value="ENSP00000411013.3"/>
    <property type="gene ID" value="ENSG00000160183.17"/>
</dbReference>
<dbReference type="Ensembl" id="ENST00000644384.2">
    <molecule id="P57727-5"/>
    <property type="protein sequence ID" value="ENSP00000494414.1"/>
    <property type="gene ID" value="ENSG00000160183.17"/>
</dbReference>
<dbReference type="Ensembl" id="ENST00000652415.1">
    <molecule id="P57727-5"/>
    <property type="protein sequence ID" value="ENSP00000498756.1"/>
    <property type="gene ID" value="ENSG00000160183.17"/>
</dbReference>
<dbReference type="GeneID" id="64699"/>
<dbReference type="KEGG" id="hsa:64699"/>
<dbReference type="MANE-Select" id="ENST00000644384.2">
    <molecule id="P57727-5"/>
    <property type="protein sequence ID" value="ENSP00000494414.1"/>
    <property type="RefSeq nucleotide sequence ID" value="NM_001256317.3"/>
    <property type="RefSeq protein sequence ID" value="NP_001243246.1"/>
</dbReference>
<dbReference type="UCSC" id="uc002zbc.4">
    <molecule id="P57727-1"/>
    <property type="organism name" value="human"/>
</dbReference>
<dbReference type="AGR" id="HGNC:11877"/>
<dbReference type="CTD" id="64699"/>
<dbReference type="DisGeNET" id="64699"/>
<dbReference type="GeneCards" id="TMPRSS3"/>
<dbReference type="GeneReviews" id="TMPRSS3"/>
<dbReference type="HGNC" id="HGNC:11877">
    <property type="gene designation" value="TMPRSS3"/>
</dbReference>
<dbReference type="HPA" id="ENSG00000160183">
    <property type="expression patterns" value="Tissue enhanced (fallopian tube, stomach)"/>
</dbReference>
<dbReference type="MalaCards" id="TMPRSS3"/>
<dbReference type="MIM" id="601072">
    <property type="type" value="phenotype"/>
</dbReference>
<dbReference type="MIM" id="605511">
    <property type="type" value="gene"/>
</dbReference>
<dbReference type="neXtProt" id="NX_P57727"/>
<dbReference type="OpenTargets" id="ENSG00000160183"/>
<dbReference type="Orphanet" id="90636">
    <property type="disease" value="Rare autosomal recessive non-syndromic sensorineural deafness type DFNB"/>
</dbReference>
<dbReference type="PharmGKB" id="PA36578"/>
<dbReference type="VEuPathDB" id="HostDB:ENSG00000160183"/>
<dbReference type="eggNOG" id="KOG3627">
    <property type="taxonomic scope" value="Eukaryota"/>
</dbReference>
<dbReference type="GeneTree" id="ENSGT00940000158589"/>
<dbReference type="HOGENOM" id="CLU_069382_0_0_1"/>
<dbReference type="InParanoid" id="P57727"/>
<dbReference type="OMA" id="FNEMTQP"/>
<dbReference type="OrthoDB" id="6380398at2759"/>
<dbReference type="PAN-GO" id="P57727">
    <property type="GO annotations" value="0 GO annotations based on evolutionary models"/>
</dbReference>
<dbReference type="PhylomeDB" id="P57727"/>
<dbReference type="TreeFam" id="TF351678"/>
<dbReference type="PathwayCommons" id="P57727"/>
<dbReference type="SignaLink" id="P57727"/>
<dbReference type="BioGRID-ORCS" id="64699">
    <property type="hits" value="10 hits in 1143 CRISPR screens"/>
</dbReference>
<dbReference type="ChiTaRS" id="TMPRSS3">
    <property type="organism name" value="human"/>
</dbReference>
<dbReference type="GeneWiki" id="TMPRSS3"/>
<dbReference type="GenomeRNAi" id="64699"/>
<dbReference type="Pharos" id="P57727">
    <property type="development level" value="Tbio"/>
</dbReference>
<dbReference type="PRO" id="PR:P57727"/>
<dbReference type="Proteomes" id="UP000005640">
    <property type="component" value="Chromosome 21"/>
</dbReference>
<dbReference type="RNAct" id="P57727">
    <property type="molecule type" value="protein"/>
</dbReference>
<dbReference type="Bgee" id="ENSG00000160183">
    <property type="expression patterns" value="Expressed in pancreatic ductal cell and 125 other cell types or tissues"/>
</dbReference>
<dbReference type="ExpressionAtlas" id="P57727">
    <property type="expression patterns" value="baseline and differential"/>
</dbReference>
<dbReference type="GO" id="GO:0005783">
    <property type="term" value="C:endoplasmic reticulum"/>
    <property type="evidence" value="ECO:0007005"/>
    <property type="project" value="UniProtKB"/>
</dbReference>
<dbReference type="GO" id="GO:0005789">
    <property type="term" value="C:endoplasmic reticulum membrane"/>
    <property type="evidence" value="ECO:0000314"/>
    <property type="project" value="UniProtKB"/>
</dbReference>
<dbReference type="GO" id="GO:0016020">
    <property type="term" value="C:membrane"/>
    <property type="evidence" value="ECO:0000303"/>
    <property type="project" value="UniProtKB"/>
</dbReference>
<dbReference type="GO" id="GO:0043025">
    <property type="term" value="C:neuronal cell body"/>
    <property type="evidence" value="ECO:0007669"/>
    <property type="project" value="Ensembl"/>
</dbReference>
<dbReference type="GO" id="GO:0004252">
    <property type="term" value="F:serine-type endopeptidase activity"/>
    <property type="evidence" value="ECO:0000303"/>
    <property type="project" value="UniProtKB"/>
</dbReference>
<dbReference type="GO" id="GO:0017080">
    <property type="term" value="F:sodium channel regulator activity"/>
    <property type="evidence" value="ECO:0000314"/>
    <property type="project" value="MGI"/>
</dbReference>
<dbReference type="GO" id="GO:0006883">
    <property type="term" value="P:intracellular sodium ion homeostasis"/>
    <property type="evidence" value="ECO:0000314"/>
    <property type="project" value="MGI"/>
</dbReference>
<dbReference type="GO" id="GO:0006508">
    <property type="term" value="P:proteolysis"/>
    <property type="evidence" value="ECO:0000303"/>
    <property type="project" value="UniProtKB"/>
</dbReference>
<dbReference type="GO" id="GO:0007605">
    <property type="term" value="P:sensory perception of sound"/>
    <property type="evidence" value="ECO:0007669"/>
    <property type="project" value="Ensembl"/>
</dbReference>
<dbReference type="CDD" id="cd00112">
    <property type="entry name" value="LDLa"/>
    <property type="match status" value="1"/>
</dbReference>
<dbReference type="CDD" id="cd00190">
    <property type="entry name" value="Tryp_SPc"/>
    <property type="match status" value="1"/>
</dbReference>
<dbReference type="FunFam" id="3.10.250.10:FF:000025">
    <property type="entry name" value="Transmembrane protease, serine 3 (Predicted)"/>
    <property type="match status" value="1"/>
</dbReference>
<dbReference type="FunFam" id="2.40.10.10:FF:000003">
    <property type="entry name" value="Transmembrane serine protease 3"/>
    <property type="match status" value="1"/>
</dbReference>
<dbReference type="Gene3D" id="4.10.400.10">
    <property type="entry name" value="Low-density Lipoprotein Receptor"/>
    <property type="match status" value="1"/>
</dbReference>
<dbReference type="Gene3D" id="3.10.250.10">
    <property type="entry name" value="SRCR-like domain"/>
    <property type="match status" value="1"/>
</dbReference>
<dbReference type="Gene3D" id="2.40.10.10">
    <property type="entry name" value="Trypsin-like serine proteases"/>
    <property type="match status" value="1"/>
</dbReference>
<dbReference type="InterPro" id="IPR036055">
    <property type="entry name" value="LDL_receptor-like_sf"/>
</dbReference>
<dbReference type="InterPro" id="IPR023415">
    <property type="entry name" value="LDLR_class-A_CS"/>
</dbReference>
<dbReference type="InterPro" id="IPR002172">
    <property type="entry name" value="LDrepeatLR_classA_rpt"/>
</dbReference>
<dbReference type="InterPro" id="IPR009003">
    <property type="entry name" value="Peptidase_S1_PA"/>
</dbReference>
<dbReference type="InterPro" id="IPR043504">
    <property type="entry name" value="Peptidase_S1_PA_chymotrypsin"/>
</dbReference>
<dbReference type="InterPro" id="IPR001314">
    <property type="entry name" value="Peptidase_S1A"/>
</dbReference>
<dbReference type="InterPro" id="IPR001190">
    <property type="entry name" value="SRCR"/>
</dbReference>
<dbReference type="InterPro" id="IPR036772">
    <property type="entry name" value="SRCR-like_dom_sf"/>
</dbReference>
<dbReference type="InterPro" id="IPR001254">
    <property type="entry name" value="Trypsin_dom"/>
</dbReference>
<dbReference type="InterPro" id="IPR018114">
    <property type="entry name" value="TRYPSIN_HIS"/>
</dbReference>
<dbReference type="InterPro" id="IPR033116">
    <property type="entry name" value="TRYPSIN_SER"/>
</dbReference>
<dbReference type="PANTHER" id="PTHR24252">
    <property type="entry name" value="ACROSIN-RELATED"/>
    <property type="match status" value="1"/>
</dbReference>
<dbReference type="PANTHER" id="PTHR24252:SF27">
    <property type="entry name" value="TRANSMEMBRANE PROTEASE SERINE 3-LIKE"/>
    <property type="match status" value="1"/>
</dbReference>
<dbReference type="Pfam" id="PF00057">
    <property type="entry name" value="Ldl_recept_a"/>
    <property type="match status" value="1"/>
</dbReference>
<dbReference type="Pfam" id="PF15494">
    <property type="entry name" value="SRCR_2"/>
    <property type="match status" value="1"/>
</dbReference>
<dbReference type="Pfam" id="PF00089">
    <property type="entry name" value="Trypsin"/>
    <property type="match status" value="1"/>
</dbReference>
<dbReference type="PRINTS" id="PR00722">
    <property type="entry name" value="CHYMOTRYPSIN"/>
</dbReference>
<dbReference type="SMART" id="SM00192">
    <property type="entry name" value="LDLa"/>
    <property type="match status" value="1"/>
</dbReference>
<dbReference type="SMART" id="SM00202">
    <property type="entry name" value="SR"/>
    <property type="match status" value="1"/>
</dbReference>
<dbReference type="SMART" id="SM00020">
    <property type="entry name" value="Tryp_SPc"/>
    <property type="match status" value="1"/>
</dbReference>
<dbReference type="SUPFAM" id="SSF57424">
    <property type="entry name" value="LDL receptor-like module"/>
    <property type="match status" value="1"/>
</dbReference>
<dbReference type="SUPFAM" id="SSF56487">
    <property type="entry name" value="SRCR-like"/>
    <property type="match status" value="1"/>
</dbReference>
<dbReference type="SUPFAM" id="SSF50494">
    <property type="entry name" value="Trypsin-like serine proteases"/>
    <property type="match status" value="1"/>
</dbReference>
<dbReference type="PROSITE" id="PS01209">
    <property type="entry name" value="LDLRA_1"/>
    <property type="match status" value="1"/>
</dbReference>
<dbReference type="PROSITE" id="PS50068">
    <property type="entry name" value="LDLRA_2"/>
    <property type="match status" value="1"/>
</dbReference>
<dbReference type="PROSITE" id="PS00420">
    <property type="entry name" value="SRCR_1"/>
    <property type="match status" value="1"/>
</dbReference>
<dbReference type="PROSITE" id="PS50287">
    <property type="entry name" value="SRCR_2"/>
    <property type="match status" value="1"/>
</dbReference>
<dbReference type="PROSITE" id="PS50240">
    <property type="entry name" value="TRYPSIN_DOM"/>
    <property type="match status" value="1"/>
</dbReference>
<dbReference type="PROSITE" id="PS00134">
    <property type="entry name" value="TRYPSIN_HIS"/>
    <property type="match status" value="1"/>
</dbReference>
<dbReference type="PROSITE" id="PS00135">
    <property type="entry name" value="TRYPSIN_SER"/>
    <property type="match status" value="1"/>
</dbReference>